<sequence>MSTGTVVQVIGAVVDVEFPQDAVPQVYDALKIVGEGPCNGLVLEVQQQLGGGVVRTIAMGSSDGLRRGLEVVNSGSPITVPVGTATLGRIMNVLGEPIDEAGPIGEEERYVIHRTAPSYEDQSSSTELLETGIKVIDLVCPFAKGGKVGLFGGAGVGKTVNMMELINNIAKAHSGLSVFAGVGERTREGNDFYYEMKDSGVLDKVAMVYGQMNEPPGNRLRVALSGLTMAEKFRDEGRDVLLFVDNIYRYTLAGTEVSALLGRMPSAVGYQPTLAEEMGVLQERITSTKTGSITSVQAVYVPADDLTDPSPATTFAHLDATVVLSRQIASLGIYPAVDPLDSTSRQLDPLVVGQEHYDVANGVQTVLQRYKELKDIIAILGMDELSDEDKTTVFRARKIERFLSQPFFVAEVFTGSPGKYVSLKDTIRGFKGILNGEFDHLPEQAFYMVGSIDEVIEKANKKK</sequence>
<feature type="chain" id="PRO_1000055160" description="ATP synthase subunit beta">
    <location>
        <begin position="1"/>
        <end position="463"/>
    </location>
</feature>
<feature type="binding site" evidence="1">
    <location>
        <begin position="152"/>
        <end position="159"/>
    </location>
    <ligand>
        <name>ATP</name>
        <dbReference type="ChEBI" id="CHEBI:30616"/>
    </ligand>
</feature>
<name>ATPB_SHEB8</name>
<organism>
    <name type="scientific">Shewanella baltica (strain OS185)</name>
    <dbReference type="NCBI Taxonomy" id="402882"/>
    <lineage>
        <taxon>Bacteria</taxon>
        <taxon>Pseudomonadati</taxon>
        <taxon>Pseudomonadota</taxon>
        <taxon>Gammaproteobacteria</taxon>
        <taxon>Alteromonadales</taxon>
        <taxon>Shewanellaceae</taxon>
        <taxon>Shewanella</taxon>
    </lineage>
</organism>
<gene>
    <name evidence="1" type="primary">atpD</name>
    <name type="ordered locus">Shew185_4365</name>
</gene>
<accession>A6WUJ0</accession>
<keyword id="KW-0066">ATP synthesis</keyword>
<keyword id="KW-0067">ATP-binding</keyword>
<keyword id="KW-0997">Cell inner membrane</keyword>
<keyword id="KW-1003">Cell membrane</keyword>
<keyword id="KW-0139">CF(1)</keyword>
<keyword id="KW-0375">Hydrogen ion transport</keyword>
<keyword id="KW-0406">Ion transport</keyword>
<keyword id="KW-0472">Membrane</keyword>
<keyword id="KW-0547">Nucleotide-binding</keyword>
<keyword id="KW-1278">Translocase</keyword>
<keyword id="KW-0813">Transport</keyword>
<comment type="function">
    <text evidence="1">Produces ATP from ADP in the presence of a proton gradient across the membrane. The catalytic sites are hosted primarily by the beta subunits.</text>
</comment>
<comment type="catalytic activity">
    <reaction evidence="1">
        <text>ATP + H2O + 4 H(+)(in) = ADP + phosphate + 5 H(+)(out)</text>
        <dbReference type="Rhea" id="RHEA:57720"/>
        <dbReference type="ChEBI" id="CHEBI:15377"/>
        <dbReference type="ChEBI" id="CHEBI:15378"/>
        <dbReference type="ChEBI" id="CHEBI:30616"/>
        <dbReference type="ChEBI" id="CHEBI:43474"/>
        <dbReference type="ChEBI" id="CHEBI:456216"/>
        <dbReference type="EC" id="7.1.2.2"/>
    </reaction>
</comment>
<comment type="subunit">
    <text evidence="1">F-type ATPases have 2 components, CF(1) - the catalytic core - and CF(0) - the membrane proton channel. CF(1) has five subunits: alpha(3), beta(3), gamma(1), delta(1), epsilon(1). CF(0) has three main subunits: a(1), b(2) and c(9-12). The alpha and beta chains form an alternating ring which encloses part of the gamma chain. CF(1) is attached to CF(0) by a central stalk formed by the gamma and epsilon chains, while a peripheral stalk is formed by the delta and b chains.</text>
</comment>
<comment type="subcellular location">
    <subcellularLocation>
        <location evidence="1">Cell inner membrane</location>
        <topology evidence="1">Peripheral membrane protein</topology>
    </subcellularLocation>
</comment>
<comment type="similarity">
    <text evidence="1">Belongs to the ATPase alpha/beta chains family.</text>
</comment>
<dbReference type="EC" id="7.1.2.2" evidence="1"/>
<dbReference type="EMBL" id="CP000753">
    <property type="protein sequence ID" value="ABS10479.1"/>
    <property type="molecule type" value="Genomic_DNA"/>
</dbReference>
<dbReference type="RefSeq" id="WP_006083845.1">
    <property type="nucleotide sequence ID" value="NC_009665.1"/>
</dbReference>
<dbReference type="SMR" id="A6WUJ0"/>
<dbReference type="GeneID" id="11775069"/>
<dbReference type="KEGG" id="sbm:Shew185_4365"/>
<dbReference type="HOGENOM" id="CLU_022398_0_2_6"/>
<dbReference type="GO" id="GO:0005886">
    <property type="term" value="C:plasma membrane"/>
    <property type="evidence" value="ECO:0007669"/>
    <property type="project" value="UniProtKB-SubCell"/>
</dbReference>
<dbReference type="GO" id="GO:0045259">
    <property type="term" value="C:proton-transporting ATP synthase complex"/>
    <property type="evidence" value="ECO:0007669"/>
    <property type="project" value="UniProtKB-KW"/>
</dbReference>
<dbReference type="GO" id="GO:0005524">
    <property type="term" value="F:ATP binding"/>
    <property type="evidence" value="ECO:0007669"/>
    <property type="project" value="UniProtKB-UniRule"/>
</dbReference>
<dbReference type="GO" id="GO:0016887">
    <property type="term" value="F:ATP hydrolysis activity"/>
    <property type="evidence" value="ECO:0007669"/>
    <property type="project" value="InterPro"/>
</dbReference>
<dbReference type="GO" id="GO:0046933">
    <property type="term" value="F:proton-transporting ATP synthase activity, rotational mechanism"/>
    <property type="evidence" value="ECO:0007669"/>
    <property type="project" value="UniProtKB-UniRule"/>
</dbReference>
<dbReference type="CDD" id="cd18110">
    <property type="entry name" value="ATP-synt_F1_beta_C"/>
    <property type="match status" value="1"/>
</dbReference>
<dbReference type="CDD" id="cd18115">
    <property type="entry name" value="ATP-synt_F1_beta_N"/>
    <property type="match status" value="1"/>
</dbReference>
<dbReference type="CDD" id="cd01133">
    <property type="entry name" value="F1-ATPase_beta_CD"/>
    <property type="match status" value="1"/>
</dbReference>
<dbReference type="FunFam" id="1.10.1140.10:FF:000001">
    <property type="entry name" value="ATP synthase subunit beta"/>
    <property type="match status" value="1"/>
</dbReference>
<dbReference type="FunFam" id="2.40.10.170:FF:000003">
    <property type="entry name" value="ATP synthase subunit beta"/>
    <property type="match status" value="1"/>
</dbReference>
<dbReference type="FunFam" id="3.40.50.300:FF:000004">
    <property type="entry name" value="ATP synthase subunit beta"/>
    <property type="match status" value="1"/>
</dbReference>
<dbReference type="Gene3D" id="2.40.10.170">
    <property type="match status" value="1"/>
</dbReference>
<dbReference type="Gene3D" id="1.10.1140.10">
    <property type="entry name" value="Bovine Mitochondrial F1-atpase, Atp Synthase Beta Chain, Chain D, domain 3"/>
    <property type="match status" value="1"/>
</dbReference>
<dbReference type="Gene3D" id="3.40.50.300">
    <property type="entry name" value="P-loop containing nucleotide triphosphate hydrolases"/>
    <property type="match status" value="1"/>
</dbReference>
<dbReference type="HAMAP" id="MF_01347">
    <property type="entry name" value="ATP_synth_beta_bact"/>
    <property type="match status" value="1"/>
</dbReference>
<dbReference type="InterPro" id="IPR003593">
    <property type="entry name" value="AAA+_ATPase"/>
</dbReference>
<dbReference type="InterPro" id="IPR055190">
    <property type="entry name" value="ATP-synt_VA_C"/>
</dbReference>
<dbReference type="InterPro" id="IPR005722">
    <property type="entry name" value="ATP_synth_F1_bsu"/>
</dbReference>
<dbReference type="InterPro" id="IPR020003">
    <property type="entry name" value="ATPase_a/bsu_AS"/>
</dbReference>
<dbReference type="InterPro" id="IPR050053">
    <property type="entry name" value="ATPase_alpha/beta_chains"/>
</dbReference>
<dbReference type="InterPro" id="IPR004100">
    <property type="entry name" value="ATPase_F1/V1/A1_a/bsu_N"/>
</dbReference>
<dbReference type="InterPro" id="IPR036121">
    <property type="entry name" value="ATPase_F1/V1/A1_a/bsu_N_sf"/>
</dbReference>
<dbReference type="InterPro" id="IPR000194">
    <property type="entry name" value="ATPase_F1/V1/A1_a/bsu_nucl-bd"/>
</dbReference>
<dbReference type="InterPro" id="IPR024034">
    <property type="entry name" value="ATPase_F1/V1_b/a_C"/>
</dbReference>
<dbReference type="InterPro" id="IPR027417">
    <property type="entry name" value="P-loop_NTPase"/>
</dbReference>
<dbReference type="NCBIfam" id="TIGR01039">
    <property type="entry name" value="atpD"/>
    <property type="match status" value="1"/>
</dbReference>
<dbReference type="PANTHER" id="PTHR15184">
    <property type="entry name" value="ATP SYNTHASE"/>
    <property type="match status" value="1"/>
</dbReference>
<dbReference type="PANTHER" id="PTHR15184:SF71">
    <property type="entry name" value="ATP SYNTHASE SUBUNIT BETA, MITOCHONDRIAL"/>
    <property type="match status" value="1"/>
</dbReference>
<dbReference type="Pfam" id="PF00006">
    <property type="entry name" value="ATP-synt_ab"/>
    <property type="match status" value="1"/>
</dbReference>
<dbReference type="Pfam" id="PF02874">
    <property type="entry name" value="ATP-synt_ab_N"/>
    <property type="match status" value="1"/>
</dbReference>
<dbReference type="Pfam" id="PF22919">
    <property type="entry name" value="ATP-synt_VA_C"/>
    <property type="match status" value="1"/>
</dbReference>
<dbReference type="SMART" id="SM00382">
    <property type="entry name" value="AAA"/>
    <property type="match status" value="1"/>
</dbReference>
<dbReference type="SUPFAM" id="SSF47917">
    <property type="entry name" value="C-terminal domain of alpha and beta subunits of F1 ATP synthase"/>
    <property type="match status" value="1"/>
</dbReference>
<dbReference type="SUPFAM" id="SSF50615">
    <property type="entry name" value="N-terminal domain of alpha and beta subunits of F1 ATP synthase"/>
    <property type="match status" value="1"/>
</dbReference>
<dbReference type="SUPFAM" id="SSF52540">
    <property type="entry name" value="P-loop containing nucleoside triphosphate hydrolases"/>
    <property type="match status" value="1"/>
</dbReference>
<dbReference type="PROSITE" id="PS00152">
    <property type="entry name" value="ATPASE_ALPHA_BETA"/>
    <property type="match status" value="1"/>
</dbReference>
<evidence type="ECO:0000255" key="1">
    <source>
        <dbReference type="HAMAP-Rule" id="MF_01347"/>
    </source>
</evidence>
<proteinExistence type="inferred from homology"/>
<reference key="1">
    <citation type="submission" date="2007-07" db="EMBL/GenBank/DDBJ databases">
        <title>Complete sequence of chromosome of Shewanella baltica OS185.</title>
        <authorList>
            <consortium name="US DOE Joint Genome Institute"/>
            <person name="Copeland A."/>
            <person name="Lucas S."/>
            <person name="Lapidus A."/>
            <person name="Barry K."/>
            <person name="Glavina del Rio T."/>
            <person name="Dalin E."/>
            <person name="Tice H."/>
            <person name="Pitluck S."/>
            <person name="Sims D."/>
            <person name="Brettin T."/>
            <person name="Bruce D."/>
            <person name="Detter J.C."/>
            <person name="Han C."/>
            <person name="Schmutz J."/>
            <person name="Larimer F."/>
            <person name="Land M."/>
            <person name="Hauser L."/>
            <person name="Kyrpides N."/>
            <person name="Mikhailova N."/>
            <person name="Brettar I."/>
            <person name="Rodrigues J."/>
            <person name="Konstantinidis K."/>
            <person name="Tiedje J."/>
            <person name="Richardson P."/>
        </authorList>
    </citation>
    <scope>NUCLEOTIDE SEQUENCE [LARGE SCALE GENOMIC DNA]</scope>
    <source>
        <strain>OS185</strain>
    </source>
</reference>
<protein>
    <recommendedName>
        <fullName evidence="1">ATP synthase subunit beta</fullName>
        <ecNumber evidence="1">7.1.2.2</ecNumber>
    </recommendedName>
    <alternativeName>
        <fullName evidence="1">ATP synthase F1 sector subunit beta</fullName>
    </alternativeName>
    <alternativeName>
        <fullName evidence="1">F-ATPase subunit beta</fullName>
    </alternativeName>
</protein>